<protein>
    <recommendedName>
        <fullName evidence="1">Probable transcriptional regulatory protein MMAR_2098</fullName>
    </recommendedName>
</protein>
<reference key="1">
    <citation type="journal article" date="2008" name="Genome Res.">
        <title>Insights from the complete genome sequence of Mycobacterium marinum on the evolution of Mycobacterium tuberculosis.</title>
        <authorList>
            <person name="Stinear T.P."/>
            <person name="Seemann T."/>
            <person name="Harrison P.F."/>
            <person name="Jenkin G.A."/>
            <person name="Davies J.K."/>
            <person name="Johnson P.D."/>
            <person name="Abdellah Z."/>
            <person name="Arrowsmith C."/>
            <person name="Chillingworth T."/>
            <person name="Churcher C."/>
            <person name="Clarke K."/>
            <person name="Cronin A."/>
            <person name="Davis P."/>
            <person name="Goodhead I."/>
            <person name="Holroyd N."/>
            <person name="Jagels K."/>
            <person name="Lord A."/>
            <person name="Moule S."/>
            <person name="Mungall K."/>
            <person name="Norbertczak H."/>
            <person name="Quail M.A."/>
            <person name="Rabbinowitsch E."/>
            <person name="Walker D."/>
            <person name="White B."/>
            <person name="Whitehead S."/>
            <person name="Small P.L."/>
            <person name="Brosch R."/>
            <person name="Ramakrishnan L."/>
            <person name="Fischbach M.A."/>
            <person name="Parkhill J."/>
            <person name="Cole S.T."/>
        </authorList>
    </citation>
    <scope>NUCLEOTIDE SEQUENCE [LARGE SCALE GENOMIC DNA]</scope>
    <source>
        <strain>ATCC BAA-535 / M</strain>
    </source>
</reference>
<name>Y2098_MYCMM</name>
<evidence type="ECO:0000255" key="1">
    <source>
        <dbReference type="HAMAP-Rule" id="MF_00693"/>
    </source>
</evidence>
<accession>B2HN50</accession>
<dbReference type="EMBL" id="CP000854">
    <property type="protein sequence ID" value="ACC40548.1"/>
    <property type="molecule type" value="Genomic_DNA"/>
</dbReference>
<dbReference type="RefSeq" id="WP_011741062.1">
    <property type="nucleotide sequence ID" value="NC_010612.1"/>
</dbReference>
<dbReference type="SMR" id="B2HN50"/>
<dbReference type="STRING" id="216594.MMAR_2098"/>
<dbReference type="GeneID" id="34342832"/>
<dbReference type="KEGG" id="mmi:MMAR_2098"/>
<dbReference type="eggNOG" id="COG0217">
    <property type="taxonomic scope" value="Bacteria"/>
</dbReference>
<dbReference type="HOGENOM" id="CLU_062974_2_2_11"/>
<dbReference type="OrthoDB" id="9781053at2"/>
<dbReference type="Proteomes" id="UP000001190">
    <property type="component" value="Chromosome"/>
</dbReference>
<dbReference type="GO" id="GO:0005829">
    <property type="term" value="C:cytosol"/>
    <property type="evidence" value="ECO:0007669"/>
    <property type="project" value="TreeGrafter"/>
</dbReference>
<dbReference type="GO" id="GO:0003677">
    <property type="term" value="F:DNA binding"/>
    <property type="evidence" value="ECO:0007669"/>
    <property type="project" value="UniProtKB-UniRule"/>
</dbReference>
<dbReference type="GO" id="GO:0006355">
    <property type="term" value="P:regulation of DNA-templated transcription"/>
    <property type="evidence" value="ECO:0007669"/>
    <property type="project" value="UniProtKB-UniRule"/>
</dbReference>
<dbReference type="FunFam" id="1.10.10.200:FF:000002">
    <property type="entry name" value="Probable transcriptional regulatory protein CLM62_37755"/>
    <property type="match status" value="1"/>
</dbReference>
<dbReference type="FunFam" id="3.30.70.980:FF:000006">
    <property type="entry name" value="Probable transcriptional regulatory protein J113_18170"/>
    <property type="match status" value="1"/>
</dbReference>
<dbReference type="Gene3D" id="1.10.10.200">
    <property type="match status" value="1"/>
</dbReference>
<dbReference type="Gene3D" id="3.30.70.980">
    <property type="match status" value="2"/>
</dbReference>
<dbReference type="HAMAP" id="MF_00693">
    <property type="entry name" value="Transcrip_reg_TACO1"/>
    <property type="match status" value="1"/>
</dbReference>
<dbReference type="InterPro" id="IPR017856">
    <property type="entry name" value="Integrase-like_N"/>
</dbReference>
<dbReference type="InterPro" id="IPR048300">
    <property type="entry name" value="TACO1_YebC-like_2nd/3rd_dom"/>
</dbReference>
<dbReference type="InterPro" id="IPR049083">
    <property type="entry name" value="TACO1_YebC_N"/>
</dbReference>
<dbReference type="InterPro" id="IPR002876">
    <property type="entry name" value="Transcrip_reg_TACO1-like"/>
</dbReference>
<dbReference type="InterPro" id="IPR026564">
    <property type="entry name" value="Transcrip_reg_TACO1-like_dom3"/>
</dbReference>
<dbReference type="InterPro" id="IPR029072">
    <property type="entry name" value="YebC-like"/>
</dbReference>
<dbReference type="NCBIfam" id="NF001030">
    <property type="entry name" value="PRK00110.1"/>
    <property type="match status" value="1"/>
</dbReference>
<dbReference type="NCBIfam" id="NF009044">
    <property type="entry name" value="PRK12378.1"/>
    <property type="match status" value="1"/>
</dbReference>
<dbReference type="NCBIfam" id="TIGR01033">
    <property type="entry name" value="YebC/PmpR family DNA-binding transcriptional regulator"/>
    <property type="match status" value="1"/>
</dbReference>
<dbReference type="PANTHER" id="PTHR12532:SF6">
    <property type="entry name" value="TRANSCRIPTIONAL REGULATORY PROTEIN YEBC-RELATED"/>
    <property type="match status" value="1"/>
</dbReference>
<dbReference type="PANTHER" id="PTHR12532">
    <property type="entry name" value="TRANSLATIONAL ACTIVATOR OF CYTOCHROME C OXIDASE 1"/>
    <property type="match status" value="1"/>
</dbReference>
<dbReference type="Pfam" id="PF20772">
    <property type="entry name" value="TACO1_YebC_N"/>
    <property type="match status" value="1"/>
</dbReference>
<dbReference type="Pfam" id="PF01709">
    <property type="entry name" value="Transcrip_reg"/>
    <property type="match status" value="1"/>
</dbReference>
<dbReference type="SUPFAM" id="SSF75625">
    <property type="entry name" value="YebC-like"/>
    <property type="match status" value="1"/>
</dbReference>
<proteinExistence type="inferred from homology"/>
<keyword id="KW-0963">Cytoplasm</keyword>
<keyword id="KW-0238">DNA-binding</keyword>
<keyword id="KW-1185">Reference proteome</keyword>
<keyword id="KW-0804">Transcription</keyword>
<keyword id="KW-0805">Transcription regulation</keyword>
<sequence length="251" mass="26815">MSGHSKWATTKHKKAVIDARRGKMFARLIKNIEVAARVGGGDPAGNPTLYDAIQKAKKSSVPNENIERARKRGAGEEAGGADWQTIMYEGYAPNGVAVLIECLTDNRNRAASEVRVAMTRNGGAMADPGSVSYLFSRKGVVTLEKNGLTEDDVLAAVLEAGAEDVNDLGDSFEVISEPGELVAVRSALQDAGIDYESAEAGFQSSVTVPVDVDGARKVFKLVDALEESDDVQNVWTNVDVSDEVLAELDEE</sequence>
<comment type="subcellular location">
    <subcellularLocation>
        <location evidence="1">Cytoplasm</location>
    </subcellularLocation>
</comment>
<comment type="similarity">
    <text evidence="1">Belongs to the TACO1 family.</text>
</comment>
<organism>
    <name type="scientific">Mycobacterium marinum (strain ATCC BAA-535 / M)</name>
    <dbReference type="NCBI Taxonomy" id="216594"/>
    <lineage>
        <taxon>Bacteria</taxon>
        <taxon>Bacillati</taxon>
        <taxon>Actinomycetota</taxon>
        <taxon>Actinomycetes</taxon>
        <taxon>Mycobacteriales</taxon>
        <taxon>Mycobacteriaceae</taxon>
        <taxon>Mycobacterium</taxon>
        <taxon>Mycobacterium ulcerans group</taxon>
    </lineage>
</organism>
<gene>
    <name type="ordered locus">MMAR_2098</name>
</gene>
<feature type="chain" id="PRO_1000132219" description="Probable transcriptional regulatory protein MMAR_2098">
    <location>
        <begin position="1"/>
        <end position="251"/>
    </location>
</feature>